<name>CHSD_IPONI</name>
<evidence type="ECO:0000255" key="1">
    <source>
        <dbReference type="PROSITE-ProRule" id="PRU10023"/>
    </source>
</evidence>
<evidence type="ECO:0000305" key="2"/>
<comment type="function">
    <text>The primary product of this enzyme is 4,2',4',6'-tetrahydroxychalcone (also termed naringenin-chalcone or chalcone) which can under specific conditions spontaneously isomerize into naringenin.</text>
</comment>
<comment type="catalytic activity">
    <reaction evidence="1">
        <text>(E)-4-coumaroyl-CoA + 3 malonyl-CoA + 3 H(+) = 2',4,4',6'-tetrahydroxychalcone + 3 CO2 + 4 CoA</text>
        <dbReference type="Rhea" id="RHEA:11128"/>
        <dbReference type="ChEBI" id="CHEBI:15378"/>
        <dbReference type="ChEBI" id="CHEBI:15413"/>
        <dbReference type="ChEBI" id="CHEBI:16526"/>
        <dbReference type="ChEBI" id="CHEBI:57287"/>
        <dbReference type="ChEBI" id="CHEBI:57384"/>
        <dbReference type="ChEBI" id="CHEBI:85008"/>
        <dbReference type="EC" id="2.3.1.74"/>
    </reaction>
</comment>
<comment type="pathway">
    <text>Secondary metabolite biosynthesis; flavonoid biosynthesis.</text>
</comment>
<comment type="similarity">
    <text evidence="2">Belongs to the thiolase-like superfamily. Chalcone/stilbene synthases family.</text>
</comment>
<organism>
    <name type="scientific">Ipomoea nil</name>
    <name type="common">Japanese morning glory</name>
    <name type="synonym">Pharbitis nil</name>
    <dbReference type="NCBI Taxonomy" id="35883"/>
    <lineage>
        <taxon>Eukaryota</taxon>
        <taxon>Viridiplantae</taxon>
        <taxon>Streptophyta</taxon>
        <taxon>Embryophyta</taxon>
        <taxon>Tracheophyta</taxon>
        <taxon>Spermatophyta</taxon>
        <taxon>Magnoliopsida</taxon>
        <taxon>eudicotyledons</taxon>
        <taxon>Gunneridae</taxon>
        <taxon>Pentapetalae</taxon>
        <taxon>asterids</taxon>
        <taxon>lamiids</taxon>
        <taxon>Solanales</taxon>
        <taxon>Convolvulaceae</taxon>
        <taxon>Ipomoeeae</taxon>
        <taxon>Ipomoea</taxon>
    </lineage>
</organism>
<accession>O22045</accession>
<keyword id="KW-0012">Acyltransferase</keyword>
<keyword id="KW-0284">Flavonoid biosynthesis</keyword>
<keyword id="KW-0808">Transferase</keyword>
<gene>
    <name type="primary">CHSD</name>
</gene>
<reference key="1">
    <citation type="journal article" date="1997" name="Plant Cell Physiol.">
        <title>Identification of new chalcone synthase genes for flower pigmentation in the Japanese and common morning glories.</title>
        <authorList>
            <person name="Fukada-Tanaka S."/>
            <person name="Hoshino A."/>
            <person name="Hisatomi Y."/>
            <person name="Habu Y."/>
            <person name="Hasebe M."/>
            <person name="Iida S."/>
        </authorList>
    </citation>
    <scope>NUCLEOTIDE SEQUENCE [MRNA]</scope>
    <source>
        <strain>cv. KK/ZSK-2</strain>
        <tissue>Flower bud</tissue>
    </source>
</reference>
<protein>
    <recommendedName>
        <fullName>Chalcone synthase D</fullName>
        <ecNumber>2.3.1.74</ecNumber>
    </recommendedName>
    <alternativeName>
        <fullName>Naringenin-chalcone synthase D</fullName>
        <shortName>CHS-D</shortName>
    </alternativeName>
</protein>
<proteinExistence type="evidence at transcript level"/>
<sequence length="388" mass="42183">MVTVEEVRKAQRAEGPATILAIGTATPANCVDQSTYPDYYFRITNSDHMTDLKQKFQRMCDKSMITKRYMHLTEEILKENPSFCEYMAPSLDARQDIVVVEVPKLGKEAAQSAIKEWGQPKSKITHVIFCTTSGVDMPGADYQLTKLLGLRPSVKRLMMYQQGCFAGGTVLRVAKDLAENNKAARVLVVCSEITVVTFRGPNETHLDSLVGQALFGDGAAAIIVGSDPTPAEKPLFQLVSAAQTLAPDSCGAIDGHLREVGLTFHLLKDVPSIVSNNIEKCLSEAFNPLGISDWNSIFWIAHPGGPAILDQVEDKLGLKPEKLRATRHVLSEYGNMSSACVLFILDEMRKASSNDGLGTTGEGLEWGVLFGFGPGLTIETVVLHSVPA</sequence>
<feature type="chain" id="PRO_0000216037" description="Chalcone synthase D">
    <location>
        <begin position="1"/>
        <end position="388"/>
    </location>
</feature>
<feature type="active site" evidence="1">
    <location>
        <position position="164"/>
    </location>
</feature>
<dbReference type="EC" id="2.3.1.74"/>
<dbReference type="EMBL" id="AB001818">
    <property type="protein sequence ID" value="BAA21787.1"/>
    <property type="molecule type" value="mRNA"/>
</dbReference>
<dbReference type="RefSeq" id="XP_019181556.1">
    <property type="nucleotide sequence ID" value="XM_019326011.1"/>
</dbReference>
<dbReference type="SMR" id="O22045"/>
<dbReference type="GeneID" id="109176547"/>
<dbReference type="KEGG" id="ini:109176547"/>
<dbReference type="OrthoDB" id="1500228at2759"/>
<dbReference type="UniPathway" id="UPA00154"/>
<dbReference type="GO" id="GO:0016210">
    <property type="term" value="F:naringenin-chalcone synthase activity"/>
    <property type="evidence" value="ECO:0007669"/>
    <property type="project" value="UniProtKB-EC"/>
</dbReference>
<dbReference type="GO" id="GO:0009813">
    <property type="term" value="P:flavonoid biosynthetic process"/>
    <property type="evidence" value="ECO:0007669"/>
    <property type="project" value="UniProtKB-UniPathway"/>
</dbReference>
<dbReference type="GO" id="GO:0030639">
    <property type="term" value="P:polyketide biosynthetic process"/>
    <property type="evidence" value="ECO:0007669"/>
    <property type="project" value="TreeGrafter"/>
</dbReference>
<dbReference type="CDD" id="cd00831">
    <property type="entry name" value="CHS_like"/>
    <property type="match status" value="1"/>
</dbReference>
<dbReference type="FunFam" id="3.40.47.10:FF:000014">
    <property type="entry name" value="Chalcone synthase 1"/>
    <property type="match status" value="1"/>
</dbReference>
<dbReference type="FunFam" id="3.40.47.10:FF:000025">
    <property type="entry name" value="Chalcone synthase 2"/>
    <property type="match status" value="1"/>
</dbReference>
<dbReference type="Gene3D" id="3.40.47.10">
    <property type="match status" value="2"/>
</dbReference>
<dbReference type="InterPro" id="IPR012328">
    <property type="entry name" value="Chalcone/stilbene_synt_C"/>
</dbReference>
<dbReference type="InterPro" id="IPR001099">
    <property type="entry name" value="Chalcone/stilbene_synt_N"/>
</dbReference>
<dbReference type="InterPro" id="IPR018088">
    <property type="entry name" value="Chalcone/stilbene_synthase_AS"/>
</dbReference>
<dbReference type="InterPro" id="IPR011141">
    <property type="entry name" value="Polyketide_synthase_type-III"/>
</dbReference>
<dbReference type="InterPro" id="IPR016039">
    <property type="entry name" value="Thiolase-like"/>
</dbReference>
<dbReference type="PANTHER" id="PTHR11877:SF80">
    <property type="entry name" value="CHALCONE SYNTHASE 1"/>
    <property type="match status" value="1"/>
</dbReference>
<dbReference type="PANTHER" id="PTHR11877">
    <property type="entry name" value="HYDROXYMETHYLGLUTARYL-COA SYNTHASE"/>
    <property type="match status" value="1"/>
</dbReference>
<dbReference type="Pfam" id="PF02797">
    <property type="entry name" value="Chal_sti_synt_C"/>
    <property type="match status" value="1"/>
</dbReference>
<dbReference type="Pfam" id="PF00195">
    <property type="entry name" value="Chal_sti_synt_N"/>
    <property type="match status" value="1"/>
</dbReference>
<dbReference type="PIRSF" id="PIRSF000451">
    <property type="entry name" value="PKS_III"/>
    <property type="match status" value="1"/>
</dbReference>
<dbReference type="SUPFAM" id="SSF53901">
    <property type="entry name" value="Thiolase-like"/>
    <property type="match status" value="2"/>
</dbReference>
<dbReference type="PROSITE" id="PS00441">
    <property type="entry name" value="CHALCONE_SYNTH"/>
    <property type="match status" value="1"/>
</dbReference>